<organism>
    <name type="scientific">Arthroderma benhamiae (strain ATCC MYA-4681 / CBS 112371)</name>
    <name type="common">Trichophyton mentagrophytes</name>
    <dbReference type="NCBI Taxonomy" id="663331"/>
    <lineage>
        <taxon>Eukaryota</taxon>
        <taxon>Fungi</taxon>
        <taxon>Dikarya</taxon>
        <taxon>Ascomycota</taxon>
        <taxon>Pezizomycotina</taxon>
        <taxon>Eurotiomycetes</taxon>
        <taxon>Eurotiomycetidae</taxon>
        <taxon>Onygenales</taxon>
        <taxon>Arthrodermataceae</taxon>
        <taxon>Trichophyton</taxon>
    </lineage>
</organism>
<name>SWNH2_ARTBC</name>
<protein>
    <recommendedName>
        <fullName evidence="9">Dioxygenase swnH2</fullName>
        <ecNumber evidence="11">1.14.11.-</ecNumber>
    </recommendedName>
    <alternativeName>
        <fullName evidence="9">Swainsonine biosynthesis gene cluster protein H2</fullName>
    </alternativeName>
</protein>
<accession>D4AU30</accession>
<gene>
    <name evidence="9" type="primary">swnH2</name>
    <name type="ORF">ARB_07843</name>
</gene>
<proteinExistence type="inferred from homology"/>
<reference key="1">
    <citation type="journal article" date="2011" name="Genome Biol.">
        <title>Comparative and functional genomics provide insights into the pathogenicity of dermatophytic fungi.</title>
        <authorList>
            <person name="Burmester A."/>
            <person name="Shelest E."/>
            <person name="Gloeckner G."/>
            <person name="Heddergott C."/>
            <person name="Schindler S."/>
            <person name="Staib P."/>
            <person name="Heidel A."/>
            <person name="Felder M."/>
            <person name="Petzold A."/>
            <person name="Szafranski K."/>
            <person name="Feuermann M."/>
            <person name="Pedruzzi I."/>
            <person name="Priebe S."/>
            <person name="Groth M."/>
            <person name="Winkler R."/>
            <person name="Li W."/>
            <person name="Kniemeyer O."/>
            <person name="Schroeckh V."/>
            <person name="Hertweck C."/>
            <person name="Hube B."/>
            <person name="White T.C."/>
            <person name="Platzer M."/>
            <person name="Guthke R."/>
            <person name="Heitman J."/>
            <person name="Woestemeyer J."/>
            <person name="Zipfel P.F."/>
            <person name="Monod M."/>
            <person name="Brakhage A.A."/>
        </authorList>
    </citation>
    <scope>NUCLEOTIDE SEQUENCE [LARGE SCALE GENOMIC DNA]</scope>
    <source>
        <strain>ATCC MYA-4681 / CBS 112371</strain>
    </source>
</reference>
<reference key="2">
    <citation type="journal article" date="2017" name="G3 (Bethesda)">
        <title>Swainsonine biosynthesis genes in diverse symbiotic and pathogenic fungi.</title>
        <authorList>
            <person name="Cook D."/>
            <person name="Donzelli B.G."/>
            <person name="Creamer R."/>
            <person name="Baucom D.L."/>
            <person name="Gardner D.R."/>
            <person name="Pan J."/>
            <person name="Moore N."/>
            <person name="Jaromczyk J.W."/>
            <person name="Schardl C.L."/>
        </authorList>
    </citation>
    <scope>IDENTIFICATION</scope>
    <scope>PATHWAY</scope>
</reference>
<keyword id="KW-0223">Dioxygenase</keyword>
<keyword id="KW-0408">Iron</keyword>
<keyword id="KW-0479">Metal-binding</keyword>
<keyword id="KW-0560">Oxidoreductase</keyword>
<keyword id="KW-1185">Reference proteome</keyword>
<comment type="function">
    <text evidence="1 2 3 4 5 8">Aminotransferase; part of the gene cluster that mediates the biosynthesis of swainsonine (SW), a cytotoxic fungal alkaloid and a potential cancer therapy drug (PubMed:28381497). Swainsonine production occurs via a multibranched pathway and is dispensable for fungal colonization of plants and infection of insect hosts (By similarity). The first step of swainsonine biosynthesis is the production of the precursor pipecolic acid (PA) via conversion of L-lysine (Lys) to 1-piperideine-6-carboxylate (P6C) by the aminotransferase swnA, the latter being further reduced to PA by the reductase swnR (By similarity). The PKS-NRPS hybrid synthetase swnK uptakes and condensates PA and malonyl-CoA with and without skipping of the ketoreductase (KR) domain in order to produce 3 intermediates, 1-oxoindolizidine, (1S)-1-hydroxyindolizin, and (1R)-1-hydroxyindolizine; with the transisomer (1S)-1-hydroxyindolizin being predominant (By similarity). The terminal thioester reductase (TE) domain of swnK is involved in reduction of the thioester bond to release the intermediate aldehydes (By similarity). The oxidoreductase swnN could contribute to the reduction of 1-oxoindolizidine to (1S)-1-hydroxyindolizin and (1R)-1-hydroxyindolizine, contributing to the major route of SW production (By similarity). The dioxygenase swnH2 would be responsible for the oxidization of (1R)-1-hydroxyindolizine into (1R,2S)-1,2-dihydroxyindolizine and of (1S)-1-hydroxyindolizin to yield both (1R,2S)-1,2-dihydroxyindolizine and (1S,2S)-1,2-dihydroxyindolizine (By similarity). The dioxygenase swnH1 then performs the conversion of the 1,2-dihydroxyindolizine epimers to SW (By similarity).</text>
</comment>
<comment type="cofactor">
    <cofactor evidence="7">
        <name>Fe cation</name>
        <dbReference type="ChEBI" id="CHEBI:24875"/>
    </cofactor>
</comment>
<comment type="pathway">
    <text evidence="11">Mycotoxin biosynthesis.</text>
</comment>
<comment type="subunit">
    <text evidence="7">Homodimer.</text>
</comment>
<comment type="similarity">
    <text evidence="10">Belongs to the PhyH family.</text>
</comment>
<evidence type="ECO:0000250" key="1">
    <source>
        <dbReference type="UniProtKB" id="E9F8L8"/>
    </source>
</evidence>
<evidence type="ECO:0000250" key="2">
    <source>
        <dbReference type="UniProtKB" id="E9F8L9"/>
    </source>
</evidence>
<evidence type="ECO:0000250" key="3">
    <source>
        <dbReference type="UniProtKB" id="E9F8M1"/>
    </source>
</evidence>
<evidence type="ECO:0000250" key="4">
    <source>
        <dbReference type="UniProtKB" id="E9F8M3"/>
    </source>
</evidence>
<evidence type="ECO:0000250" key="5">
    <source>
        <dbReference type="UniProtKB" id="E9F8M4"/>
    </source>
</evidence>
<evidence type="ECO:0000250" key="6">
    <source>
        <dbReference type="UniProtKB" id="O14832"/>
    </source>
</evidence>
<evidence type="ECO:0000250" key="7">
    <source>
        <dbReference type="UniProtKB" id="Q4WAW9"/>
    </source>
</evidence>
<evidence type="ECO:0000269" key="8">
    <source>
    </source>
</evidence>
<evidence type="ECO:0000303" key="9">
    <source>
    </source>
</evidence>
<evidence type="ECO:0000305" key="10"/>
<evidence type="ECO:0000305" key="11">
    <source>
    </source>
</evidence>
<dbReference type="EC" id="1.14.11.-" evidence="11"/>
<dbReference type="EMBL" id="ABSU01000010">
    <property type="protein sequence ID" value="EFE33483.1"/>
    <property type="molecule type" value="Genomic_DNA"/>
</dbReference>
<dbReference type="RefSeq" id="XP_003014123.1">
    <property type="nucleotide sequence ID" value="XM_003014077.1"/>
</dbReference>
<dbReference type="SMR" id="D4AU30"/>
<dbReference type="GeneID" id="9521540"/>
<dbReference type="KEGG" id="abe:ARB_07843"/>
<dbReference type="eggNOG" id="ENOG502SHTY">
    <property type="taxonomic scope" value="Eukaryota"/>
</dbReference>
<dbReference type="HOGENOM" id="CLU_047725_0_0_1"/>
<dbReference type="OMA" id="GSHKWEH"/>
<dbReference type="OrthoDB" id="445007at2759"/>
<dbReference type="Proteomes" id="UP000008866">
    <property type="component" value="Unassembled WGS sequence"/>
</dbReference>
<dbReference type="GO" id="GO:0051213">
    <property type="term" value="F:dioxygenase activity"/>
    <property type="evidence" value="ECO:0007669"/>
    <property type="project" value="UniProtKB-KW"/>
</dbReference>
<dbReference type="GO" id="GO:0046872">
    <property type="term" value="F:metal ion binding"/>
    <property type="evidence" value="ECO:0007669"/>
    <property type="project" value="UniProtKB-KW"/>
</dbReference>
<dbReference type="Gene3D" id="2.60.120.620">
    <property type="entry name" value="q2cbj1_9rhob like domain"/>
    <property type="match status" value="1"/>
</dbReference>
<dbReference type="InterPro" id="IPR051961">
    <property type="entry name" value="Fungal_Metabolite_Diox"/>
</dbReference>
<dbReference type="InterPro" id="IPR008775">
    <property type="entry name" value="Phytyl_CoA_dOase-like"/>
</dbReference>
<dbReference type="PANTHER" id="PTHR37563">
    <property type="entry name" value="PHYTANOYL-COA DIOXYGENASE FAMILY PROTEIN (AFU_ORTHOLOGUE AFUA_2G03330)"/>
    <property type="match status" value="1"/>
</dbReference>
<dbReference type="PANTHER" id="PTHR37563:SF2">
    <property type="entry name" value="PHYTANOYL-COA DIOXYGENASE FAMILY PROTEIN (AFU_ORTHOLOGUE AFUA_2G03330)"/>
    <property type="match status" value="1"/>
</dbReference>
<dbReference type="Pfam" id="PF05721">
    <property type="entry name" value="PhyH"/>
    <property type="match status" value="1"/>
</dbReference>
<dbReference type="SUPFAM" id="SSF51197">
    <property type="entry name" value="Clavaminate synthase-like"/>
    <property type="match status" value="1"/>
</dbReference>
<feature type="chain" id="PRO_0000441185" description="Dioxygenase swnH2">
    <location>
        <begin position="1"/>
        <end position="313"/>
    </location>
</feature>
<feature type="binding site" evidence="6">
    <location>
        <position position="155"/>
    </location>
    <ligand>
        <name>Fe cation</name>
        <dbReference type="ChEBI" id="CHEBI:24875"/>
    </ligand>
</feature>
<feature type="binding site" evidence="6">
    <location>
        <position position="157"/>
    </location>
    <ligand>
        <name>Fe cation</name>
        <dbReference type="ChEBI" id="CHEBI:24875"/>
    </ligand>
</feature>
<feature type="binding site" evidence="6">
    <location>
        <position position="232"/>
    </location>
    <ligand>
        <name>Fe cation</name>
        <dbReference type="ChEBI" id="CHEBI:24875"/>
    </ligand>
</feature>
<sequence>MDKKYAAARLLPPIDASYQPARSVTKIPATSSLEEILEVLERDGGVILTDFVPKETMDKIDEELEPYTKTIPDSDSYDDFIGKKTLVIAGLISKSDTLANILDTNETIDKLLKIILEERYPAVFEGHTEELVIDPLLSISMAFHVGQGSPRQALHRDDMVFSSKHHPNMKINEVDGFSCFIAGSNVTRENGGTMVILGSHKWEHDRRGRPDEVSFLEMERGSAFIFLSTMAHGAGYNTIPGEIRKIMNLVFCRGTLRQEENQFLCNPRSKVLKMSPKMQTLLGFKKPAGTWLGMVDNDDPAKDLPAIYEKIMQ</sequence>